<organism>
    <name type="scientific">Yersinia pestis</name>
    <dbReference type="NCBI Taxonomy" id="632"/>
    <lineage>
        <taxon>Bacteria</taxon>
        <taxon>Pseudomonadati</taxon>
        <taxon>Pseudomonadota</taxon>
        <taxon>Gammaproteobacteria</taxon>
        <taxon>Enterobacterales</taxon>
        <taxon>Yersiniaceae</taxon>
        <taxon>Yersinia</taxon>
    </lineage>
</organism>
<comment type="function">
    <text evidence="1">Di-iron-containing protein involved in the repair of iron-sulfur clusters damaged by oxidative and nitrosative stress conditions.</text>
</comment>
<comment type="subunit">
    <text evidence="1">Homodimer.</text>
</comment>
<comment type="subcellular location">
    <subcellularLocation>
        <location evidence="1">Cytoplasm</location>
    </subcellularLocation>
</comment>
<comment type="similarity">
    <text evidence="1">Belongs to the RIC family. YtfE subfamily.</text>
</comment>
<reference key="1">
    <citation type="journal article" date="2001" name="Nature">
        <title>Genome sequence of Yersinia pestis, the causative agent of plague.</title>
        <authorList>
            <person name="Parkhill J."/>
            <person name="Wren B.W."/>
            <person name="Thomson N.R."/>
            <person name="Titball R.W."/>
            <person name="Holden M.T.G."/>
            <person name="Prentice M.B."/>
            <person name="Sebaihia M."/>
            <person name="James K.D."/>
            <person name="Churcher C.M."/>
            <person name="Mungall K.L."/>
            <person name="Baker S."/>
            <person name="Basham D."/>
            <person name="Bentley S.D."/>
            <person name="Brooks K."/>
            <person name="Cerdeno-Tarraga A.-M."/>
            <person name="Chillingworth T."/>
            <person name="Cronin A."/>
            <person name="Davies R.M."/>
            <person name="Davis P."/>
            <person name="Dougan G."/>
            <person name="Feltwell T."/>
            <person name="Hamlin N."/>
            <person name="Holroyd S."/>
            <person name="Jagels K."/>
            <person name="Karlyshev A.V."/>
            <person name="Leather S."/>
            <person name="Moule S."/>
            <person name="Oyston P.C.F."/>
            <person name="Quail M.A."/>
            <person name="Rutherford K.M."/>
            <person name="Simmonds M."/>
            <person name="Skelton J."/>
            <person name="Stevens K."/>
            <person name="Whitehead S."/>
            <person name="Barrell B.G."/>
        </authorList>
    </citation>
    <scope>NUCLEOTIDE SEQUENCE [LARGE SCALE GENOMIC DNA]</scope>
    <source>
        <strain>CO-92 / Biovar Orientalis</strain>
    </source>
</reference>
<reference key="2">
    <citation type="journal article" date="2002" name="J. Bacteriol.">
        <title>Genome sequence of Yersinia pestis KIM.</title>
        <authorList>
            <person name="Deng W."/>
            <person name="Burland V."/>
            <person name="Plunkett G. III"/>
            <person name="Boutin A."/>
            <person name="Mayhew G.F."/>
            <person name="Liss P."/>
            <person name="Perna N.T."/>
            <person name="Rose D.J."/>
            <person name="Mau B."/>
            <person name="Zhou S."/>
            <person name="Schwartz D.C."/>
            <person name="Fetherston J.D."/>
            <person name="Lindler L.E."/>
            <person name="Brubaker R.R."/>
            <person name="Plano G.V."/>
            <person name="Straley S.C."/>
            <person name="McDonough K.A."/>
            <person name="Nilles M.L."/>
            <person name="Matson J.S."/>
            <person name="Blattner F.R."/>
            <person name="Perry R.D."/>
        </authorList>
    </citation>
    <scope>NUCLEOTIDE SEQUENCE [LARGE SCALE GENOMIC DNA]</scope>
    <source>
        <strain>KIM10+ / Biovar Mediaevalis</strain>
    </source>
</reference>
<reference key="3">
    <citation type="journal article" date="2004" name="DNA Res.">
        <title>Complete genome sequence of Yersinia pestis strain 91001, an isolate avirulent to humans.</title>
        <authorList>
            <person name="Song Y."/>
            <person name="Tong Z."/>
            <person name="Wang J."/>
            <person name="Wang L."/>
            <person name="Guo Z."/>
            <person name="Han Y."/>
            <person name="Zhang J."/>
            <person name="Pei D."/>
            <person name="Zhou D."/>
            <person name="Qin H."/>
            <person name="Pang X."/>
            <person name="Han Y."/>
            <person name="Zhai J."/>
            <person name="Li M."/>
            <person name="Cui B."/>
            <person name="Qi Z."/>
            <person name="Jin L."/>
            <person name="Dai R."/>
            <person name="Chen F."/>
            <person name="Li S."/>
            <person name="Ye C."/>
            <person name="Du Z."/>
            <person name="Lin W."/>
            <person name="Wang J."/>
            <person name="Yu J."/>
            <person name="Yang H."/>
            <person name="Wang J."/>
            <person name="Huang P."/>
            <person name="Yang R."/>
        </authorList>
    </citation>
    <scope>NUCLEOTIDE SEQUENCE [LARGE SCALE GENOMIC DNA]</scope>
    <source>
        <strain>91001 / Biovar Mediaevalis</strain>
    </source>
</reference>
<accession>Q8ZB88</accession>
<accession>Q0WBB8</accession>
<accession>Q74X98</accession>
<accession>Q7CKL0</accession>
<protein>
    <recommendedName>
        <fullName evidence="1">Iron-sulfur cluster repair protein YtfE</fullName>
    </recommendedName>
</protein>
<keyword id="KW-0963">Cytoplasm</keyword>
<keyword id="KW-0408">Iron</keyword>
<keyword id="KW-0479">Metal-binding</keyword>
<keyword id="KW-1185">Reference proteome</keyword>
<keyword id="KW-0346">Stress response</keyword>
<name>YTFE_YERPE</name>
<dbReference type="EMBL" id="AL590842">
    <property type="protein sequence ID" value="CAL22119.1"/>
    <property type="molecule type" value="Genomic_DNA"/>
</dbReference>
<dbReference type="EMBL" id="AE009952">
    <property type="protein sequence ID" value="AAM84240.1"/>
    <property type="molecule type" value="Genomic_DNA"/>
</dbReference>
<dbReference type="EMBL" id="AE017042">
    <property type="protein sequence ID" value="AAS60822.1"/>
    <property type="molecule type" value="Genomic_DNA"/>
</dbReference>
<dbReference type="PIR" id="AD0429">
    <property type="entry name" value="AD0429"/>
</dbReference>
<dbReference type="RefSeq" id="WP_002210159.1">
    <property type="nucleotide sequence ID" value="NZ_WUCM01000036.1"/>
</dbReference>
<dbReference type="RefSeq" id="YP_002348420.1">
    <property type="nucleotide sequence ID" value="NC_003143.1"/>
</dbReference>
<dbReference type="SMR" id="Q8ZB88"/>
<dbReference type="IntAct" id="Q8ZB88">
    <property type="interactions" value="1"/>
</dbReference>
<dbReference type="STRING" id="214092.YPO3531"/>
<dbReference type="PaxDb" id="214092-YPO3531"/>
<dbReference type="DNASU" id="1145599"/>
<dbReference type="EnsemblBacteria" id="AAS60822">
    <property type="protein sequence ID" value="AAS60822"/>
    <property type="gene ID" value="YP_0552"/>
</dbReference>
<dbReference type="GeneID" id="57975183"/>
<dbReference type="KEGG" id="ype:YPO3531"/>
<dbReference type="KEGG" id="ypk:y0652"/>
<dbReference type="KEGG" id="ypm:YP_0552"/>
<dbReference type="PATRIC" id="fig|1028802.3.peg.1187"/>
<dbReference type="eggNOG" id="COG2846">
    <property type="taxonomic scope" value="Bacteria"/>
</dbReference>
<dbReference type="HOGENOM" id="CLU_076075_2_0_6"/>
<dbReference type="OMA" id="ACTTWRV"/>
<dbReference type="OrthoDB" id="9797132at2"/>
<dbReference type="Proteomes" id="UP000000815">
    <property type="component" value="Chromosome"/>
</dbReference>
<dbReference type="Proteomes" id="UP000001019">
    <property type="component" value="Chromosome"/>
</dbReference>
<dbReference type="Proteomes" id="UP000002490">
    <property type="component" value="Chromosome"/>
</dbReference>
<dbReference type="GO" id="GO:0005829">
    <property type="term" value="C:cytosol"/>
    <property type="evidence" value="ECO:0000318"/>
    <property type="project" value="GO_Central"/>
</dbReference>
<dbReference type="GO" id="GO:0005506">
    <property type="term" value="F:iron ion binding"/>
    <property type="evidence" value="ECO:0000318"/>
    <property type="project" value="GO_Central"/>
</dbReference>
<dbReference type="GO" id="GO:0098809">
    <property type="term" value="F:nitrite reductase activity"/>
    <property type="evidence" value="ECO:0000318"/>
    <property type="project" value="GO_Central"/>
</dbReference>
<dbReference type="GO" id="GO:0030091">
    <property type="term" value="P:protein repair"/>
    <property type="evidence" value="ECO:0000318"/>
    <property type="project" value="GO_Central"/>
</dbReference>
<dbReference type="GO" id="GO:0051409">
    <property type="term" value="P:response to nitrosative stress"/>
    <property type="evidence" value="ECO:0007669"/>
    <property type="project" value="UniProtKB-UniRule"/>
</dbReference>
<dbReference type="GO" id="GO:0006979">
    <property type="term" value="P:response to oxidative stress"/>
    <property type="evidence" value="ECO:0007669"/>
    <property type="project" value="UniProtKB-UniRule"/>
</dbReference>
<dbReference type="CDD" id="cd12108">
    <property type="entry name" value="Hr-like"/>
    <property type="match status" value="1"/>
</dbReference>
<dbReference type="Gene3D" id="1.20.120.520">
    <property type="entry name" value="nmb1532 protein domain like"/>
    <property type="match status" value="1"/>
</dbReference>
<dbReference type="HAMAP" id="MF_01606">
    <property type="entry name" value="RIC_YtfE"/>
    <property type="match status" value="1"/>
</dbReference>
<dbReference type="InterPro" id="IPR023742">
    <property type="entry name" value="FeS-repair_YftE"/>
</dbReference>
<dbReference type="InterPro" id="IPR012312">
    <property type="entry name" value="Hemerythrin-like"/>
</dbReference>
<dbReference type="InterPro" id="IPR019903">
    <property type="entry name" value="RIC_family"/>
</dbReference>
<dbReference type="NCBIfam" id="TIGR03652">
    <property type="entry name" value="FeS_repair_RIC"/>
    <property type="match status" value="1"/>
</dbReference>
<dbReference type="NCBIfam" id="NF008221">
    <property type="entry name" value="PRK10992.1"/>
    <property type="match status" value="1"/>
</dbReference>
<dbReference type="PANTHER" id="PTHR36438">
    <property type="entry name" value="IRON-SULFUR CLUSTER REPAIR PROTEIN YTFE"/>
    <property type="match status" value="1"/>
</dbReference>
<dbReference type="PANTHER" id="PTHR36438:SF1">
    <property type="entry name" value="IRON-SULFUR CLUSTER REPAIR PROTEIN YTFE"/>
    <property type="match status" value="1"/>
</dbReference>
<dbReference type="Pfam" id="PF01814">
    <property type="entry name" value="Hemerythrin"/>
    <property type="match status" value="1"/>
</dbReference>
<dbReference type="Pfam" id="PF04405">
    <property type="entry name" value="ScdA_N"/>
    <property type="match status" value="1"/>
</dbReference>
<proteinExistence type="inferred from homology"/>
<gene>
    <name evidence="1" type="primary">ytfE</name>
    <name type="ordered locus">YPO3531</name>
    <name type="ordered locus">y0652</name>
    <name type="ordered locus">YP_0552</name>
</gene>
<sequence length="221" mass="25063">MDYRNQSLGALAIAIPRATKLFRQHQLDFCCGGKQTLLRAANKLNLDIDALEAQLSALQTEPHSSEDWQQQPLTNLISFIISRYHDRHREQLPELVLMAEKVERVHGEKPTCPRGLAAELSAILEELTQHMYKEEQILFPMIQRGMGSQASGPIFVMEAEHDAVGQQLDVVKQLTQNVTPPEGACNTWRALYTGINEFITDLMEHIHLENNLLFPRALRGE</sequence>
<feature type="chain" id="PRO_0000213057" description="Iron-sulfur cluster repair protein YtfE">
    <location>
        <begin position="1"/>
        <end position="221"/>
    </location>
</feature>
<evidence type="ECO:0000255" key="1">
    <source>
        <dbReference type="HAMAP-Rule" id="MF_01606"/>
    </source>
</evidence>